<protein>
    <recommendedName>
        <fullName evidence="1">tRNA dimethylallyltransferase</fullName>
        <ecNumber evidence="1">2.5.1.75</ecNumber>
    </recommendedName>
    <alternativeName>
        <fullName evidence="1">Dimethylallyl diphosphate:tRNA dimethylallyltransferase</fullName>
        <shortName evidence="1">DMAPP:tRNA dimethylallyltransferase</shortName>
        <shortName evidence="1">DMATase</shortName>
    </alternativeName>
    <alternativeName>
        <fullName evidence="1">Isopentenyl-diphosphate:tRNA isopentenyltransferase</fullName>
        <shortName evidence="1">IPP transferase</shortName>
        <shortName evidence="1">IPPT</shortName>
        <shortName evidence="1">IPTase</shortName>
    </alternativeName>
</protein>
<feature type="chain" id="PRO_1000020639" description="tRNA dimethylallyltransferase">
    <location>
        <begin position="1"/>
        <end position="323"/>
    </location>
</feature>
<feature type="region of interest" description="Interaction with substrate tRNA" evidence="1">
    <location>
        <begin position="37"/>
        <end position="40"/>
    </location>
</feature>
<feature type="region of interest" description="Interaction with substrate tRNA" evidence="1">
    <location>
        <begin position="161"/>
        <end position="165"/>
    </location>
</feature>
<feature type="binding site" evidence="1">
    <location>
        <begin position="12"/>
        <end position="19"/>
    </location>
    <ligand>
        <name>ATP</name>
        <dbReference type="ChEBI" id="CHEBI:30616"/>
    </ligand>
</feature>
<feature type="binding site" evidence="1">
    <location>
        <begin position="14"/>
        <end position="19"/>
    </location>
    <ligand>
        <name>substrate</name>
    </ligand>
</feature>
<feature type="site" description="Interaction with substrate tRNA" evidence="1">
    <location>
        <position position="103"/>
    </location>
</feature>
<feature type="site" description="Interaction with substrate tRNA" evidence="1">
    <location>
        <position position="125"/>
    </location>
</feature>
<accession>Q48P03</accession>
<name>MIAA_PSE14</name>
<evidence type="ECO:0000255" key="1">
    <source>
        <dbReference type="HAMAP-Rule" id="MF_00185"/>
    </source>
</evidence>
<sequence>MNALPPAIFLMGPTAAGKTDLAIELSKVLPCELISVDSALVYRGMDIGTAKPSKAQLAEYPHRLIDILDPAQSYSAADFRSDALAAMAEITARGNIPLLVGGTMLYFKALLHGLADMPAADAQVRAQLEADAQAYGWQSLHDQLAVVDPVSAARIHPNDPQRLIRALEVYRVSGMSMTAHREQQTAQSTEAAASGRQQLPYTVANLAIAPADRKVLHQRIALRFEQMLDQGFLDEVLALRSRGDLHSGLPSIRAVGYRQVWDHLDGKLTRDEMQERGIIATRQLAKRQFTWLRSWEDLHWLDSLASDNLSRALKYLGSVSILS</sequence>
<reference key="1">
    <citation type="journal article" date="2005" name="J. Bacteriol.">
        <title>Whole-genome sequence analysis of Pseudomonas syringae pv. phaseolicola 1448A reveals divergence among pathovars in genes involved in virulence and transposition.</title>
        <authorList>
            <person name="Joardar V."/>
            <person name="Lindeberg M."/>
            <person name="Jackson R.W."/>
            <person name="Selengut J."/>
            <person name="Dodson R."/>
            <person name="Brinkac L.M."/>
            <person name="Daugherty S.C."/>
            <person name="DeBoy R.T."/>
            <person name="Durkin A.S."/>
            <person name="Gwinn Giglio M."/>
            <person name="Madupu R."/>
            <person name="Nelson W.C."/>
            <person name="Rosovitz M.J."/>
            <person name="Sullivan S.A."/>
            <person name="Crabtree J."/>
            <person name="Creasy T."/>
            <person name="Davidsen T.M."/>
            <person name="Haft D.H."/>
            <person name="Zafar N."/>
            <person name="Zhou L."/>
            <person name="Halpin R."/>
            <person name="Holley T."/>
            <person name="Khouri H.M."/>
            <person name="Feldblyum T.V."/>
            <person name="White O."/>
            <person name="Fraser C.M."/>
            <person name="Chatterjee A.K."/>
            <person name="Cartinhour S."/>
            <person name="Schneider D."/>
            <person name="Mansfield J.W."/>
            <person name="Collmer A."/>
            <person name="Buell R."/>
        </authorList>
    </citation>
    <scope>NUCLEOTIDE SEQUENCE [LARGE SCALE GENOMIC DNA]</scope>
    <source>
        <strain>1448A / Race 6</strain>
    </source>
</reference>
<gene>
    <name evidence="1" type="primary">miaA</name>
    <name type="ordered locus">PSPPH_0564</name>
</gene>
<comment type="function">
    <text evidence="1">Catalyzes the transfer of a dimethylallyl group onto the adenine at position 37 in tRNAs that read codons beginning with uridine, leading to the formation of N6-(dimethylallyl)adenosine (i(6)A).</text>
</comment>
<comment type="catalytic activity">
    <reaction evidence="1">
        <text>adenosine(37) in tRNA + dimethylallyl diphosphate = N(6)-dimethylallyladenosine(37) in tRNA + diphosphate</text>
        <dbReference type="Rhea" id="RHEA:26482"/>
        <dbReference type="Rhea" id="RHEA-COMP:10162"/>
        <dbReference type="Rhea" id="RHEA-COMP:10375"/>
        <dbReference type="ChEBI" id="CHEBI:33019"/>
        <dbReference type="ChEBI" id="CHEBI:57623"/>
        <dbReference type="ChEBI" id="CHEBI:74411"/>
        <dbReference type="ChEBI" id="CHEBI:74415"/>
        <dbReference type="EC" id="2.5.1.75"/>
    </reaction>
</comment>
<comment type="cofactor">
    <cofactor evidence="1">
        <name>Mg(2+)</name>
        <dbReference type="ChEBI" id="CHEBI:18420"/>
    </cofactor>
</comment>
<comment type="subunit">
    <text evidence="1">Monomer.</text>
</comment>
<comment type="similarity">
    <text evidence="1">Belongs to the IPP transferase family.</text>
</comment>
<dbReference type="EC" id="2.5.1.75" evidence="1"/>
<dbReference type="EMBL" id="CP000058">
    <property type="protein sequence ID" value="AAZ37300.1"/>
    <property type="molecule type" value="Genomic_DNA"/>
</dbReference>
<dbReference type="RefSeq" id="WP_011167564.1">
    <property type="nucleotide sequence ID" value="NC_005773.3"/>
</dbReference>
<dbReference type="SMR" id="Q48P03"/>
<dbReference type="KEGG" id="psp:PSPPH_0564"/>
<dbReference type="eggNOG" id="COG0324">
    <property type="taxonomic scope" value="Bacteria"/>
</dbReference>
<dbReference type="HOGENOM" id="CLU_032616_0_0_6"/>
<dbReference type="Proteomes" id="UP000000551">
    <property type="component" value="Chromosome"/>
</dbReference>
<dbReference type="GO" id="GO:0005524">
    <property type="term" value="F:ATP binding"/>
    <property type="evidence" value="ECO:0007669"/>
    <property type="project" value="UniProtKB-UniRule"/>
</dbReference>
<dbReference type="GO" id="GO:0052381">
    <property type="term" value="F:tRNA dimethylallyltransferase activity"/>
    <property type="evidence" value="ECO:0007669"/>
    <property type="project" value="UniProtKB-UniRule"/>
</dbReference>
<dbReference type="GO" id="GO:0006400">
    <property type="term" value="P:tRNA modification"/>
    <property type="evidence" value="ECO:0007669"/>
    <property type="project" value="TreeGrafter"/>
</dbReference>
<dbReference type="FunFam" id="1.10.20.140:FF:000001">
    <property type="entry name" value="tRNA dimethylallyltransferase"/>
    <property type="match status" value="1"/>
</dbReference>
<dbReference type="Gene3D" id="1.10.20.140">
    <property type="match status" value="1"/>
</dbReference>
<dbReference type="Gene3D" id="3.40.50.300">
    <property type="entry name" value="P-loop containing nucleotide triphosphate hydrolases"/>
    <property type="match status" value="1"/>
</dbReference>
<dbReference type="HAMAP" id="MF_00185">
    <property type="entry name" value="IPP_trans"/>
    <property type="match status" value="1"/>
</dbReference>
<dbReference type="InterPro" id="IPR039657">
    <property type="entry name" value="Dimethylallyltransferase"/>
</dbReference>
<dbReference type="InterPro" id="IPR018022">
    <property type="entry name" value="IPT"/>
</dbReference>
<dbReference type="InterPro" id="IPR027417">
    <property type="entry name" value="P-loop_NTPase"/>
</dbReference>
<dbReference type="NCBIfam" id="TIGR00174">
    <property type="entry name" value="miaA"/>
    <property type="match status" value="1"/>
</dbReference>
<dbReference type="PANTHER" id="PTHR11088">
    <property type="entry name" value="TRNA DIMETHYLALLYLTRANSFERASE"/>
    <property type="match status" value="1"/>
</dbReference>
<dbReference type="PANTHER" id="PTHR11088:SF60">
    <property type="entry name" value="TRNA DIMETHYLALLYLTRANSFERASE"/>
    <property type="match status" value="1"/>
</dbReference>
<dbReference type="Pfam" id="PF01715">
    <property type="entry name" value="IPPT"/>
    <property type="match status" value="1"/>
</dbReference>
<dbReference type="SUPFAM" id="SSF52540">
    <property type="entry name" value="P-loop containing nucleoside triphosphate hydrolases"/>
    <property type="match status" value="1"/>
</dbReference>
<proteinExistence type="inferred from homology"/>
<organism>
    <name type="scientific">Pseudomonas savastanoi pv. phaseolicola (strain 1448A / Race 6)</name>
    <name type="common">Pseudomonas syringae pv. phaseolicola (strain 1448A / Race 6)</name>
    <dbReference type="NCBI Taxonomy" id="264730"/>
    <lineage>
        <taxon>Bacteria</taxon>
        <taxon>Pseudomonadati</taxon>
        <taxon>Pseudomonadota</taxon>
        <taxon>Gammaproteobacteria</taxon>
        <taxon>Pseudomonadales</taxon>
        <taxon>Pseudomonadaceae</taxon>
        <taxon>Pseudomonas</taxon>
    </lineage>
</organism>
<keyword id="KW-0067">ATP-binding</keyword>
<keyword id="KW-0460">Magnesium</keyword>
<keyword id="KW-0547">Nucleotide-binding</keyword>
<keyword id="KW-0808">Transferase</keyword>
<keyword id="KW-0819">tRNA processing</keyword>